<gene>
    <name type="primary">PHO1-H4</name>
    <name type="ordered locus">At4g25350</name>
    <name type="ORF">T30C3.10</name>
</gene>
<keyword id="KW-1003">Cell membrane</keyword>
<keyword id="KW-0472">Membrane</keyword>
<keyword id="KW-0592">Phosphate transport</keyword>
<keyword id="KW-1185">Reference proteome</keyword>
<keyword id="KW-0812">Transmembrane</keyword>
<keyword id="KW-1133">Transmembrane helix</keyword>
<keyword id="KW-0813">Transport</keyword>
<feature type="chain" id="PRO_0000398158" description="Phosphate transporter PHO1 homolog 4">
    <location>
        <begin position="1"/>
        <end position="745"/>
    </location>
</feature>
<feature type="topological domain" description="Cytoplasmic" evidence="2">
    <location>
        <begin position="1"/>
        <end position="342"/>
    </location>
</feature>
<feature type="transmembrane region" description="Helical" evidence="2">
    <location>
        <begin position="343"/>
        <end position="363"/>
    </location>
</feature>
<feature type="topological domain" description="Extracellular" evidence="2">
    <location>
        <begin position="364"/>
        <end position="383"/>
    </location>
</feature>
<feature type="transmembrane region" description="Helical" evidence="2">
    <location>
        <begin position="384"/>
        <end position="404"/>
    </location>
</feature>
<feature type="topological domain" description="Cytoplasmic" evidence="2">
    <location>
        <begin position="405"/>
        <end position="427"/>
    </location>
</feature>
<feature type="transmembrane region" description="Helical" evidence="2">
    <location>
        <begin position="428"/>
        <end position="448"/>
    </location>
</feature>
<feature type="topological domain" description="Extracellular" evidence="2">
    <location>
        <begin position="449"/>
        <end position="464"/>
    </location>
</feature>
<feature type="transmembrane region" description="Helical" evidence="2">
    <location>
        <begin position="465"/>
        <end position="485"/>
    </location>
</feature>
<feature type="topological domain" description="Cytoplasmic" evidence="2">
    <location>
        <begin position="486"/>
        <end position="615"/>
    </location>
</feature>
<feature type="transmembrane region" description="Helical" evidence="2">
    <location>
        <begin position="616"/>
        <end position="636"/>
    </location>
</feature>
<feature type="topological domain" description="Extracellular" evidence="2">
    <location>
        <begin position="637"/>
        <end position="660"/>
    </location>
</feature>
<feature type="transmembrane region" description="Helical" evidence="2">
    <location>
        <begin position="661"/>
        <end position="681"/>
    </location>
</feature>
<feature type="topological domain" description="Cytoplasmic" evidence="2">
    <location>
        <begin position="682"/>
        <end position="745"/>
    </location>
</feature>
<feature type="domain" description="SPX" evidence="4">
    <location>
        <begin position="1"/>
        <end position="290"/>
    </location>
</feature>
<feature type="domain" description="EXS" evidence="3">
    <location>
        <begin position="550"/>
        <end position="744"/>
    </location>
</feature>
<proteinExistence type="evidence at transcript level"/>
<protein>
    <recommendedName>
        <fullName>Phosphate transporter PHO1 homolog 4</fullName>
    </recommendedName>
    <alternativeName>
        <fullName>Protein PHO1 homolog 4</fullName>
        <shortName>AtPHO1;H4</shortName>
    </alternativeName>
</protein>
<dbReference type="EMBL" id="AY507956">
    <property type="protein sequence ID" value="AAR99486.1"/>
    <property type="molecule type" value="mRNA"/>
</dbReference>
<dbReference type="EMBL" id="AL079350">
    <property type="protein sequence ID" value="CAB45511.1"/>
    <property type="status" value="ALT_SEQ"/>
    <property type="molecule type" value="Genomic_DNA"/>
</dbReference>
<dbReference type="EMBL" id="AL161563">
    <property type="protein sequence ID" value="CAB81346.1"/>
    <property type="status" value="ALT_SEQ"/>
    <property type="molecule type" value="Genomic_DNA"/>
</dbReference>
<dbReference type="EMBL" id="CP002687">
    <property type="protein sequence ID" value="AEE85045.1"/>
    <property type="molecule type" value="Genomic_DNA"/>
</dbReference>
<dbReference type="PIR" id="T10214">
    <property type="entry name" value="T10214"/>
</dbReference>
<dbReference type="SMR" id="Q6R8G6"/>
<dbReference type="FunCoup" id="Q6R8G6">
    <property type="interactions" value="2584"/>
</dbReference>
<dbReference type="STRING" id="3702.Q6R8G6"/>
<dbReference type="GlyGen" id="Q6R8G6">
    <property type="glycosylation" value="1 site"/>
</dbReference>
<dbReference type="PaxDb" id="3702-AT4G25350.1"/>
<dbReference type="ProteomicsDB" id="235060"/>
<dbReference type="EnsemblPlants" id="AT4G25350.1">
    <property type="protein sequence ID" value="AT4G25350.1"/>
    <property type="gene ID" value="AT4G25350"/>
</dbReference>
<dbReference type="GeneID" id="828638"/>
<dbReference type="Gramene" id="AT4G25350.1">
    <property type="protein sequence ID" value="AT4G25350.1"/>
    <property type="gene ID" value="AT4G25350"/>
</dbReference>
<dbReference type="KEGG" id="ath:AT4G25350"/>
<dbReference type="Araport" id="AT4G25350"/>
<dbReference type="TAIR" id="AT4G25350">
    <property type="gene designation" value="SHB1"/>
</dbReference>
<dbReference type="eggNOG" id="KOG1162">
    <property type="taxonomic scope" value="Eukaryota"/>
</dbReference>
<dbReference type="HOGENOM" id="CLU_006116_2_0_1"/>
<dbReference type="InParanoid" id="Q6R8G6"/>
<dbReference type="OMA" id="AVTHAGY"/>
<dbReference type="PhylomeDB" id="Q6R8G6"/>
<dbReference type="PRO" id="PR:Q6R8G6"/>
<dbReference type="Proteomes" id="UP000006548">
    <property type="component" value="Chromosome 4"/>
</dbReference>
<dbReference type="ExpressionAtlas" id="Q6R8G6">
    <property type="expression patterns" value="baseline and differential"/>
</dbReference>
<dbReference type="GO" id="GO:0005829">
    <property type="term" value="C:cytosol"/>
    <property type="evidence" value="ECO:0000314"/>
    <property type="project" value="TAIR"/>
</dbReference>
<dbReference type="GO" id="GO:0005634">
    <property type="term" value="C:nucleus"/>
    <property type="evidence" value="ECO:0000314"/>
    <property type="project" value="TAIR"/>
</dbReference>
<dbReference type="GO" id="GO:0005886">
    <property type="term" value="C:plasma membrane"/>
    <property type="evidence" value="ECO:0007669"/>
    <property type="project" value="UniProtKB-SubCell"/>
</dbReference>
<dbReference type="GO" id="GO:0009960">
    <property type="term" value="P:endosperm development"/>
    <property type="evidence" value="ECO:0000315"/>
    <property type="project" value="TAIR"/>
</dbReference>
<dbReference type="GO" id="GO:0006817">
    <property type="term" value="P:phosphate ion transport"/>
    <property type="evidence" value="ECO:0007669"/>
    <property type="project" value="UniProtKB-KW"/>
</dbReference>
<dbReference type="GO" id="GO:0045793">
    <property type="term" value="P:positive regulation of cell size"/>
    <property type="evidence" value="ECO:0000315"/>
    <property type="project" value="TAIR"/>
</dbReference>
<dbReference type="GO" id="GO:0010017">
    <property type="term" value="P:red or far-red light signaling pathway"/>
    <property type="evidence" value="ECO:0000315"/>
    <property type="project" value="TAIR"/>
</dbReference>
<dbReference type="GO" id="GO:0010468">
    <property type="term" value="P:regulation of gene expression"/>
    <property type="evidence" value="ECO:0000315"/>
    <property type="project" value="TAIR"/>
</dbReference>
<dbReference type="GO" id="GO:0080050">
    <property type="term" value="P:regulation of seed development"/>
    <property type="evidence" value="ECO:0000315"/>
    <property type="project" value="TAIR"/>
</dbReference>
<dbReference type="GO" id="GO:0080113">
    <property type="term" value="P:regulation of seed growth"/>
    <property type="evidence" value="ECO:0000315"/>
    <property type="project" value="TAIR"/>
</dbReference>
<dbReference type="CDD" id="cd14476">
    <property type="entry name" value="SPX_PHO1_like"/>
    <property type="match status" value="1"/>
</dbReference>
<dbReference type="InterPro" id="IPR004342">
    <property type="entry name" value="EXS_C"/>
</dbReference>
<dbReference type="InterPro" id="IPR034092">
    <property type="entry name" value="PHO1_SPX"/>
</dbReference>
<dbReference type="InterPro" id="IPR004331">
    <property type="entry name" value="SPX_dom"/>
</dbReference>
<dbReference type="PANTHER" id="PTHR10783:SF99">
    <property type="entry name" value="PHOSPHATE TRANSPORTER PHO1 HOMOLOG 4"/>
    <property type="match status" value="1"/>
</dbReference>
<dbReference type="PANTHER" id="PTHR10783">
    <property type="entry name" value="XENOTROPIC AND POLYTROPIC RETROVIRUS RECEPTOR 1-RELATED"/>
    <property type="match status" value="1"/>
</dbReference>
<dbReference type="Pfam" id="PF03124">
    <property type="entry name" value="EXS"/>
    <property type="match status" value="1"/>
</dbReference>
<dbReference type="Pfam" id="PF03105">
    <property type="entry name" value="SPX"/>
    <property type="match status" value="1"/>
</dbReference>
<dbReference type="PROSITE" id="PS51380">
    <property type="entry name" value="EXS"/>
    <property type="match status" value="1"/>
</dbReference>
<dbReference type="PROSITE" id="PS51382">
    <property type="entry name" value="SPX"/>
    <property type="match status" value="1"/>
</dbReference>
<organism>
    <name type="scientific">Arabidopsis thaliana</name>
    <name type="common">Mouse-ear cress</name>
    <dbReference type="NCBI Taxonomy" id="3702"/>
    <lineage>
        <taxon>Eukaryota</taxon>
        <taxon>Viridiplantae</taxon>
        <taxon>Streptophyta</taxon>
        <taxon>Embryophyta</taxon>
        <taxon>Tracheophyta</taxon>
        <taxon>Spermatophyta</taxon>
        <taxon>Magnoliopsida</taxon>
        <taxon>eudicotyledons</taxon>
        <taxon>Gunneridae</taxon>
        <taxon>Pentapetalae</taxon>
        <taxon>rosids</taxon>
        <taxon>malvids</taxon>
        <taxon>Brassicales</taxon>
        <taxon>Brassicaceae</taxon>
        <taxon>Camelineae</taxon>
        <taxon>Arabidopsis</taxon>
    </lineage>
</organism>
<name>PHO14_ARATH</name>
<accession>Q6R8G6</accession>
<accession>Q9STK3</accession>
<comment type="function">
    <text evidence="1">May transport inorganic phosphate (Pi).</text>
</comment>
<comment type="subcellular location">
    <subcellularLocation>
        <location evidence="6">Cell membrane</location>
        <topology evidence="6">Multi-pass membrane protein</topology>
    </subcellularLocation>
</comment>
<comment type="tissue specificity">
    <text evidence="5">Expressed in root epidermis and cortex, leaf hydathodes, pollen grains and stigma apex.</text>
</comment>
<comment type="induction">
    <text evidence="5">Not induced by Pi deficiency.</text>
</comment>
<comment type="similarity">
    <text evidence="6">Belongs to the SYG1 (TC 2.A.94) family.</text>
</comment>
<comment type="sequence caution" evidence="6">
    <conflict type="erroneous gene model prediction">
        <sequence resource="EMBL-CDS" id="CAB45511"/>
    </conflict>
</comment>
<comment type="sequence caution" evidence="6">
    <conflict type="erroneous gene model prediction">
        <sequence resource="EMBL-CDS" id="CAB81346"/>
    </conflict>
</comment>
<reference key="1">
    <citation type="journal article" date="2004" name="Plant Physiol.">
        <title>Structure and expression profile of the Arabidopsis PHO1 gene family indicates a broad role in inorganic phosphate homeostasis.</title>
        <authorList>
            <person name="Wang Y."/>
            <person name="Ribot C."/>
            <person name="Rezzonico E."/>
            <person name="Poirier Y."/>
        </authorList>
    </citation>
    <scope>NUCLEOTIDE SEQUENCE [MRNA]</scope>
    <scope>TISSUE SPECIFICITY</scope>
    <scope>INDUCTION</scope>
    <scope>GENE FAMILY</scope>
    <scope>NOMENCLATURE</scope>
</reference>
<reference key="2">
    <citation type="journal article" date="1999" name="Nature">
        <title>Sequence and analysis of chromosome 4 of the plant Arabidopsis thaliana.</title>
        <authorList>
            <person name="Mayer K.F.X."/>
            <person name="Schueller C."/>
            <person name="Wambutt R."/>
            <person name="Murphy G."/>
            <person name="Volckaert G."/>
            <person name="Pohl T."/>
            <person name="Duesterhoeft A."/>
            <person name="Stiekema W."/>
            <person name="Entian K.-D."/>
            <person name="Terryn N."/>
            <person name="Harris B."/>
            <person name="Ansorge W."/>
            <person name="Brandt P."/>
            <person name="Grivell L.A."/>
            <person name="Rieger M."/>
            <person name="Weichselgartner M."/>
            <person name="de Simone V."/>
            <person name="Obermaier B."/>
            <person name="Mache R."/>
            <person name="Mueller M."/>
            <person name="Kreis M."/>
            <person name="Delseny M."/>
            <person name="Puigdomenech P."/>
            <person name="Watson M."/>
            <person name="Schmidtheini T."/>
            <person name="Reichert B."/>
            <person name="Portetelle D."/>
            <person name="Perez-Alonso M."/>
            <person name="Boutry M."/>
            <person name="Bancroft I."/>
            <person name="Vos P."/>
            <person name="Hoheisel J."/>
            <person name="Zimmermann W."/>
            <person name="Wedler H."/>
            <person name="Ridley P."/>
            <person name="Langham S.-A."/>
            <person name="McCullagh B."/>
            <person name="Bilham L."/>
            <person name="Robben J."/>
            <person name="van der Schueren J."/>
            <person name="Grymonprez B."/>
            <person name="Chuang Y.-J."/>
            <person name="Vandenbussche F."/>
            <person name="Braeken M."/>
            <person name="Weltjens I."/>
            <person name="Voet M."/>
            <person name="Bastiaens I."/>
            <person name="Aert R."/>
            <person name="Defoor E."/>
            <person name="Weitzenegger T."/>
            <person name="Bothe G."/>
            <person name="Ramsperger U."/>
            <person name="Hilbert H."/>
            <person name="Braun M."/>
            <person name="Holzer E."/>
            <person name="Brandt A."/>
            <person name="Peters S."/>
            <person name="van Staveren M."/>
            <person name="Dirkse W."/>
            <person name="Mooijman P."/>
            <person name="Klein Lankhorst R."/>
            <person name="Rose M."/>
            <person name="Hauf J."/>
            <person name="Koetter P."/>
            <person name="Berneiser S."/>
            <person name="Hempel S."/>
            <person name="Feldpausch M."/>
            <person name="Lamberth S."/>
            <person name="Van den Daele H."/>
            <person name="De Keyser A."/>
            <person name="Buysshaert C."/>
            <person name="Gielen J."/>
            <person name="Villarroel R."/>
            <person name="De Clercq R."/>
            <person name="van Montagu M."/>
            <person name="Rogers J."/>
            <person name="Cronin A."/>
            <person name="Quail M.A."/>
            <person name="Bray-Allen S."/>
            <person name="Clark L."/>
            <person name="Doggett J."/>
            <person name="Hall S."/>
            <person name="Kay M."/>
            <person name="Lennard N."/>
            <person name="McLay K."/>
            <person name="Mayes R."/>
            <person name="Pettett A."/>
            <person name="Rajandream M.A."/>
            <person name="Lyne M."/>
            <person name="Benes V."/>
            <person name="Rechmann S."/>
            <person name="Borkova D."/>
            <person name="Bloecker H."/>
            <person name="Scharfe M."/>
            <person name="Grimm M."/>
            <person name="Loehnert T.-H."/>
            <person name="Dose S."/>
            <person name="de Haan M."/>
            <person name="Maarse A.C."/>
            <person name="Schaefer M."/>
            <person name="Mueller-Auer S."/>
            <person name="Gabel C."/>
            <person name="Fuchs M."/>
            <person name="Fartmann B."/>
            <person name="Granderath K."/>
            <person name="Dauner D."/>
            <person name="Herzl A."/>
            <person name="Neumann S."/>
            <person name="Argiriou A."/>
            <person name="Vitale D."/>
            <person name="Liguori R."/>
            <person name="Piravandi E."/>
            <person name="Massenet O."/>
            <person name="Quigley F."/>
            <person name="Clabauld G."/>
            <person name="Muendlein A."/>
            <person name="Felber R."/>
            <person name="Schnabl S."/>
            <person name="Hiller R."/>
            <person name="Schmidt W."/>
            <person name="Lecharny A."/>
            <person name="Aubourg S."/>
            <person name="Chefdor F."/>
            <person name="Cooke R."/>
            <person name="Berger C."/>
            <person name="Monfort A."/>
            <person name="Casacuberta E."/>
            <person name="Gibbons T."/>
            <person name="Weber N."/>
            <person name="Vandenbol M."/>
            <person name="Bargues M."/>
            <person name="Terol J."/>
            <person name="Torres A."/>
            <person name="Perez-Perez A."/>
            <person name="Purnelle B."/>
            <person name="Bent E."/>
            <person name="Johnson S."/>
            <person name="Tacon D."/>
            <person name="Jesse T."/>
            <person name="Heijnen L."/>
            <person name="Schwarz S."/>
            <person name="Scholler P."/>
            <person name="Heber S."/>
            <person name="Francs P."/>
            <person name="Bielke C."/>
            <person name="Frishman D."/>
            <person name="Haase D."/>
            <person name="Lemcke K."/>
            <person name="Mewes H.-W."/>
            <person name="Stocker S."/>
            <person name="Zaccaria P."/>
            <person name="Bevan M."/>
            <person name="Wilson R.K."/>
            <person name="de la Bastide M."/>
            <person name="Habermann K."/>
            <person name="Parnell L."/>
            <person name="Dedhia N."/>
            <person name="Gnoj L."/>
            <person name="Schutz K."/>
            <person name="Huang E."/>
            <person name="Spiegel L."/>
            <person name="Sekhon M."/>
            <person name="Murray J."/>
            <person name="Sheet P."/>
            <person name="Cordes M."/>
            <person name="Abu-Threideh J."/>
            <person name="Stoneking T."/>
            <person name="Kalicki J."/>
            <person name="Graves T."/>
            <person name="Harmon G."/>
            <person name="Edwards J."/>
            <person name="Latreille P."/>
            <person name="Courtney L."/>
            <person name="Cloud J."/>
            <person name="Abbott A."/>
            <person name="Scott K."/>
            <person name="Johnson D."/>
            <person name="Minx P."/>
            <person name="Bentley D."/>
            <person name="Fulton B."/>
            <person name="Miller N."/>
            <person name="Greco T."/>
            <person name="Kemp K."/>
            <person name="Kramer J."/>
            <person name="Fulton L."/>
            <person name="Mardis E."/>
            <person name="Dante M."/>
            <person name="Pepin K."/>
            <person name="Hillier L.W."/>
            <person name="Nelson J."/>
            <person name="Spieth J."/>
            <person name="Ryan E."/>
            <person name="Andrews S."/>
            <person name="Geisel C."/>
            <person name="Layman D."/>
            <person name="Du H."/>
            <person name="Ali J."/>
            <person name="Berghoff A."/>
            <person name="Jones K."/>
            <person name="Drone K."/>
            <person name="Cotton M."/>
            <person name="Joshu C."/>
            <person name="Antonoiu B."/>
            <person name="Zidanic M."/>
            <person name="Strong C."/>
            <person name="Sun H."/>
            <person name="Lamar B."/>
            <person name="Yordan C."/>
            <person name="Ma P."/>
            <person name="Zhong J."/>
            <person name="Preston R."/>
            <person name="Vil D."/>
            <person name="Shekher M."/>
            <person name="Matero A."/>
            <person name="Shah R."/>
            <person name="Swaby I.K."/>
            <person name="O'Shaughnessy A."/>
            <person name="Rodriguez M."/>
            <person name="Hoffman J."/>
            <person name="Till S."/>
            <person name="Granat S."/>
            <person name="Shohdy N."/>
            <person name="Hasegawa A."/>
            <person name="Hameed A."/>
            <person name="Lodhi M."/>
            <person name="Johnson A."/>
            <person name="Chen E."/>
            <person name="Marra M.A."/>
            <person name="Martienssen R."/>
            <person name="McCombie W.R."/>
        </authorList>
    </citation>
    <scope>NUCLEOTIDE SEQUENCE [LARGE SCALE GENOMIC DNA]</scope>
    <source>
        <strain>cv. Columbia</strain>
    </source>
</reference>
<reference key="3">
    <citation type="journal article" date="2017" name="Plant J.">
        <title>Araport11: a complete reannotation of the Arabidopsis thaliana reference genome.</title>
        <authorList>
            <person name="Cheng C.Y."/>
            <person name="Krishnakumar V."/>
            <person name="Chan A.P."/>
            <person name="Thibaud-Nissen F."/>
            <person name="Schobel S."/>
            <person name="Town C.D."/>
        </authorList>
    </citation>
    <scope>GENOME REANNOTATION</scope>
    <source>
        <strain>cv. Columbia</strain>
    </source>
</reference>
<sequence length="745" mass="86986">MRFGKEFVSQMIPEWQEAYIDYAYLKTILQDIQASRNRSDSNNQSSTPSFARNLTRRYNRDALVSENHDIVVNTVTRLEEGLETAAYETTFLKAGEAGGDFEVTFFRTLDREFNKVNNFYRLKVETARTEALALNKQMDALIAFRHKVMDQNQKNPSVFDSVSEDINGSASEVGSSSKCTEHNVALADLMRNEDTSNESILERIRMNKTREITPLSAIKTILKVHKQDELKFTRDNLKEVEKRLQVAFIEFYQKLRHLKNYSFLNASAVSKIMKKYDKIAKRNAAKLYMEMVDKSFLSSSEEVHKLLLKVESIFIEHFSNSNRREGMSHLRPKINKERHLITFSTGFFFGCGISLIVALGLIIHARNIMGTPGQRTYMETMFPLYRFFGFVVLHMDVYAANIYFWRRYRVNYSFIFGFKQGTELGYRHVLLLSFGLGTLSLCAVLLNLDMEMDAQTKDYRLVTELIPLFLLVLVIIIVLCPFNILYRSSRFFFLSVLFRCIAAPFYAVHLPDFFLGDQLTSQVQALRSLEFYICYYGFGDFRYRRRNTCTSNIGFRTFYFIVAVIPYWLRFLQCIRRMVEDRDLSHGYNGIKYLLTIVAASLRTAYTLNRGSNWNITAWVFSGVATFYGTYWDIVLDWGLLQRGCKNSFLRDKLLVPHKTVYYAAMVLNVLLRLVWLQTVLDLKFSFLHRETMVALMACLEIIRRGIWNFFRLENEHLNNVGRYRAFKTVPLPFNYEEDGDHHNN</sequence>
<evidence type="ECO:0000250" key="1"/>
<evidence type="ECO:0000255" key="2"/>
<evidence type="ECO:0000255" key="3">
    <source>
        <dbReference type="PROSITE-ProRule" id="PRU00712"/>
    </source>
</evidence>
<evidence type="ECO:0000255" key="4">
    <source>
        <dbReference type="PROSITE-ProRule" id="PRU00714"/>
    </source>
</evidence>
<evidence type="ECO:0000269" key="5">
    <source>
    </source>
</evidence>
<evidence type="ECO:0000305" key="6"/>